<comment type="function">
    <text evidence="1">Involved in the oxidation of myo-inositol (MI) to 2-keto-myo-inositol (2KMI or 2-inosose).</text>
</comment>
<comment type="catalytic activity">
    <reaction evidence="1">
        <text>myo-inositol + NAD(+) = scyllo-inosose + NADH + H(+)</text>
        <dbReference type="Rhea" id="RHEA:16949"/>
        <dbReference type="ChEBI" id="CHEBI:15378"/>
        <dbReference type="ChEBI" id="CHEBI:17268"/>
        <dbReference type="ChEBI" id="CHEBI:17811"/>
        <dbReference type="ChEBI" id="CHEBI:57540"/>
        <dbReference type="ChEBI" id="CHEBI:57945"/>
        <dbReference type="EC" id="1.1.1.18"/>
    </reaction>
</comment>
<comment type="subunit">
    <text evidence="1">Homotetramer.</text>
</comment>
<comment type="similarity">
    <text evidence="1">Belongs to the Gfo/Idh/MocA family.</text>
</comment>
<keyword id="KW-0520">NAD</keyword>
<keyword id="KW-0560">Oxidoreductase</keyword>
<proteinExistence type="inferred from homology"/>
<dbReference type="EC" id="1.1.1.18" evidence="1"/>
<dbReference type="EMBL" id="CP000656">
    <property type="protein sequence ID" value="ABP45075.1"/>
    <property type="molecule type" value="Genomic_DNA"/>
</dbReference>
<dbReference type="SMR" id="A4T2N4"/>
<dbReference type="STRING" id="350054.Mflv_2598"/>
<dbReference type="KEGG" id="mgi:Mflv_2598"/>
<dbReference type="eggNOG" id="COG0673">
    <property type="taxonomic scope" value="Bacteria"/>
</dbReference>
<dbReference type="HOGENOM" id="CLU_023194_0_1_11"/>
<dbReference type="OrthoDB" id="256869at2"/>
<dbReference type="GO" id="GO:0050112">
    <property type="term" value="F:inositol 2-dehydrogenase (NAD+) activity"/>
    <property type="evidence" value="ECO:0007669"/>
    <property type="project" value="UniProtKB-UniRule"/>
</dbReference>
<dbReference type="GO" id="GO:0000166">
    <property type="term" value="F:nucleotide binding"/>
    <property type="evidence" value="ECO:0007669"/>
    <property type="project" value="InterPro"/>
</dbReference>
<dbReference type="GO" id="GO:0019310">
    <property type="term" value="P:inositol catabolic process"/>
    <property type="evidence" value="ECO:0007669"/>
    <property type="project" value="UniProtKB-UniRule"/>
</dbReference>
<dbReference type="Gene3D" id="3.30.360.10">
    <property type="entry name" value="Dihydrodipicolinate Reductase, domain 2"/>
    <property type="match status" value="1"/>
</dbReference>
<dbReference type="Gene3D" id="3.40.50.720">
    <property type="entry name" value="NAD(P)-binding Rossmann-like Domain"/>
    <property type="match status" value="1"/>
</dbReference>
<dbReference type="HAMAP" id="MF_01671">
    <property type="entry name" value="IolG"/>
    <property type="match status" value="1"/>
</dbReference>
<dbReference type="InterPro" id="IPR050424">
    <property type="entry name" value="Gfo-Idh-MocA_inositol_DH"/>
</dbReference>
<dbReference type="InterPro" id="IPR004104">
    <property type="entry name" value="Gfo/Idh/MocA-like_OxRdtase_C"/>
</dbReference>
<dbReference type="InterPro" id="IPR000683">
    <property type="entry name" value="Gfo/Idh/MocA-like_OxRdtase_N"/>
</dbReference>
<dbReference type="InterPro" id="IPR023794">
    <property type="entry name" value="MI/DCI_dehydrogenase"/>
</dbReference>
<dbReference type="InterPro" id="IPR036291">
    <property type="entry name" value="NAD(P)-bd_dom_sf"/>
</dbReference>
<dbReference type="PANTHER" id="PTHR43593">
    <property type="match status" value="1"/>
</dbReference>
<dbReference type="PANTHER" id="PTHR43593:SF1">
    <property type="entry name" value="INOSITOL 2-DEHYDROGENASE"/>
    <property type="match status" value="1"/>
</dbReference>
<dbReference type="Pfam" id="PF01408">
    <property type="entry name" value="GFO_IDH_MocA"/>
    <property type="match status" value="1"/>
</dbReference>
<dbReference type="Pfam" id="PF02894">
    <property type="entry name" value="GFO_IDH_MocA_C"/>
    <property type="match status" value="1"/>
</dbReference>
<dbReference type="SUPFAM" id="SSF55347">
    <property type="entry name" value="Glyceraldehyde-3-phosphate dehydrogenase-like, C-terminal domain"/>
    <property type="match status" value="1"/>
</dbReference>
<dbReference type="SUPFAM" id="SSF51735">
    <property type="entry name" value="NAD(P)-binding Rossmann-fold domains"/>
    <property type="match status" value="1"/>
</dbReference>
<protein>
    <recommendedName>
        <fullName evidence="1">Inositol 2-dehydrogenase</fullName>
        <ecNumber evidence="1">1.1.1.18</ecNumber>
    </recommendedName>
    <alternativeName>
        <fullName evidence="1">Myo-inositol 2-dehydrogenase</fullName>
        <shortName evidence="1">MI 2-dehydrogenase</shortName>
    </alternativeName>
</protein>
<gene>
    <name evidence="1" type="primary">iolG</name>
    <name type="ordered locus">Mflv_2598</name>
</gene>
<name>IOLG_MYCGI</name>
<feature type="chain" id="PRO_0000352575" description="Inositol 2-dehydrogenase">
    <location>
        <begin position="1"/>
        <end position="349"/>
    </location>
</feature>
<sequence length="349" mass="37047">MTDLRIAVLGVGVMGADHVARITSRISGARVAVVNDHLVEKAEQLAASIPGCSAVADPLDAIADADVDAVVLATPGGTHEEQLLACLDQRKPVMCEKPLTTDVSTSLEIARREADLGRPLIQVGFMRRFDDEYVRLKALLDGGELGNPLMMHCVHRNPGVPAYFDSSLIVKDSLVHEVDITRYLFGEEIASVQIIKPTSNPGAPNGVVDPQIAILRTVSGRHVDVELFVTTGVAYEVRTEVVGEHGSAIIGLDVGLIRKKGPGSWGGTLTPGFRERFGPAYDTEIQRWVDAVHSGTNVCGPTAWDGYAAAAVCAAGVESLETGLPVDVQLADEVTSPSPQGVRESDGCR</sequence>
<organism>
    <name type="scientific">Mycolicibacterium gilvum (strain PYR-GCK)</name>
    <name type="common">Mycobacterium gilvum (strain PYR-GCK)</name>
    <dbReference type="NCBI Taxonomy" id="350054"/>
    <lineage>
        <taxon>Bacteria</taxon>
        <taxon>Bacillati</taxon>
        <taxon>Actinomycetota</taxon>
        <taxon>Actinomycetes</taxon>
        <taxon>Mycobacteriales</taxon>
        <taxon>Mycobacteriaceae</taxon>
        <taxon>Mycolicibacterium</taxon>
    </lineage>
</organism>
<evidence type="ECO:0000255" key="1">
    <source>
        <dbReference type="HAMAP-Rule" id="MF_01671"/>
    </source>
</evidence>
<reference key="1">
    <citation type="submission" date="2007-04" db="EMBL/GenBank/DDBJ databases">
        <title>Complete sequence of chromosome of Mycobacterium gilvum PYR-GCK.</title>
        <authorList>
            <consortium name="US DOE Joint Genome Institute"/>
            <person name="Copeland A."/>
            <person name="Lucas S."/>
            <person name="Lapidus A."/>
            <person name="Barry K."/>
            <person name="Detter J.C."/>
            <person name="Glavina del Rio T."/>
            <person name="Hammon N."/>
            <person name="Israni S."/>
            <person name="Dalin E."/>
            <person name="Tice H."/>
            <person name="Pitluck S."/>
            <person name="Chain P."/>
            <person name="Malfatti S."/>
            <person name="Shin M."/>
            <person name="Vergez L."/>
            <person name="Schmutz J."/>
            <person name="Larimer F."/>
            <person name="Land M."/>
            <person name="Hauser L."/>
            <person name="Kyrpides N."/>
            <person name="Mikhailova N."/>
            <person name="Miller C."/>
            <person name="Richardson P."/>
        </authorList>
    </citation>
    <scope>NUCLEOTIDE SEQUENCE [LARGE SCALE GENOMIC DNA]</scope>
    <source>
        <strain>PYR-GCK</strain>
    </source>
</reference>
<accession>A4T2N4</accession>